<comment type="function">
    <text evidence="2 5 6">Part of the tectonic-like complex which is required for tissue-specific ciliogenesis and may regulate ciliary membrane composition. Involved in centrosome migration to the apical cell surface during early ciliogenesis. Required for ciliary structure and function, including a role in regulating length and appropriate number through modulating centrosome duplication. Is a key regulator of stereociliary bundle orientation. Required for epithelial cell branching morphology. Essential for endoplasmic reticulum-associated degradation (ERAD) of surfactant protein C (sftpc) (By similarity). Involved in the negative regulation of canonical Wnt signaling, and activation of the non-canonical cascade stimulated by WNT5A (By similarity). In non-canonical Wnt signaling, it may act as ROR2 coreceptor (By similarity).</text>
</comment>
<comment type="subunit">
    <text evidence="1 2">Homodimer (By similarity). Part of the tectonic-like complex (also named B9 complex) (By similarity). Interacts with DNAJB9, DNAJC10 and mutated SFTPC (By similarity). Interacts with SYNE2 during the early establishment of cell polarity (By similarity). Interacts (via C-terminus) with FLNA (By similarity). Interacts with TMEM218 (By similarity). Interacts with WNT5A (By similarity). Interacts with ROR2 (By similarity).</text>
</comment>
<comment type="subcellular location">
    <subcellularLocation>
        <location evidence="1">Cell membrane</location>
        <topology evidence="3">Multi-pass membrane protein</topology>
    </subcellularLocation>
    <subcellularLocation>
        <location evidence="6">Endoplasmic reticulum membrane</location>
        <topology evidence="3">Multi-pass membrane protein</topology>
    </subcellularLocation>
    <subcellularLocation>
        <location evidence="1">Cytoplasm</location>
        <location evidence="1">Cytoskeleton</location>
        <location evidence="1">Cilium basal body</location>
    </subcellularLocation>
    <text evidence="1">Localizes at the transition zone, a region between the basal body and the ciliary axoneme.</text>
</comment>
<comment type="disease">
    <text evidence="4">Defects in Tmem67 are the cause of Wistar polycystic kidney (wpk). Homozygous wkp rats develop nephromegaly, hypertension, proteinuria, impaired urine-concentrating capacity, and uremia, resulting in death at 4 week of age. Early cysts are present in the nephrogenic zone at embryonic day 19.</text>
</comment>
<reference key="1">
    <citation type="journal article" date="2004" name="Nature">
        <title>Genome sequence of the Brown Norway rat yields insights into mammalian evolution.</title>
        <authorList>
            <person name="Gibbs R.A."/>
            <person name="Weinstock G.M."/>
            <person name="Metzker M.L."/>
            <person name="Muzny D.M."/>
            <person name="Sodergren E.J."/>
            <person name="Scherer S."/>
            <person name="Scott G."/>
            <person name="Steffen D."/>
            <person name="Worley K.C."/>
            <person name="Burch P.E."/>
            <person name="Okwuonu G."/>
            <person name="Hines S."/>
            <person name="Lewis L."/>
            <person name="Deramo C."/>
            <person name="Delgado O."/>
            <person name="Dugan-Rocha S."/>
            <person name="Miner G."/>
            <person name="Morgan M."/>
            <person name="Hawes A."/>
            <person name="Gill R."/>
            <person name="Holt R.A."/>
            <person name="Adams M.D."/>
            <person name="Amanatides P.G."/>
            <person name="Baden-Tillson H."/>
            <person name="Barnstead M."/>
            <person name="Chin S."/>
            <person name="Evans C.A."/>
            <person name="Ferriera S."/>
            <person name="Fosler C."/>
            <person name="Glodek A."/>
            <person name="Gu Z."/>
            <person name="Jennings D."/>
            <person name="Kraft C.L."/>
            <person name="Nguyen T."/>
            <person name="Pfannkoch C.M."/>
            <person name="Sitter C."/>
            <person name="Sutton G.G."/>
            <person name="Venter J.C."/>
            <person name="Woodage T."/>
            <person name="Smith D."/>
            <person name="Lee H.-M."/>
            <person name="Gustafson E."/>
            <person name="Cahill P."/>
            <person name="Kana A."/>
            <person name="Doucette-Stamm L."/>
            <person name="Weinstock K."/>
            <person name="Fechtel K."/>
            <person name="Weiss R.B."/>
            <person name="Dunn D.M."/>
            <person name="Green E.D."/>
            <person name="Blakesley R.W."/>
            <person name="Bouffard G.G."/>
            <person name="De Jong P.J."/>
            <person name="Osoegawa K."/>
            <person name="Zhu B."/>
            <person name="Marra M."/>
            <person name="Schein J."/>
            <person name="Bosdet I."/>
            <person name="Fjell C."/>
            <person name="Jones S."/>
            <person name="Krzywinski M."/>
            <person name="Mathewson C."/>
            <person name="Siddiqui A."/>
            <person name="Wye N."/>
            <person name="McPherson J."/>
            <person name="Zhao S."/>
            <person name="Fraser C.M."/>
            <person name="Shetty J."/>
            <person name="Shatsman S."/>
            <person name="Geer K."/>
            <person name="Chen Y."/>
            <person name="Abramzon S."/>
            <person name="Nierman W.C."/>
            <person name="Havlak P.H."/>
            <person name="Chen R."/>
            <person name="Durbin K.J."/>
            <person name="Egan A."/>
            <person name="Ren Y."/>
            <person name="Song X.-Z."/>
            <person name="Li B."/>
            <person name="Liu Y."/>
            <person name="Qin X."/>
            <person name="Cawley S."/>
            <person name="Cooney A.J."/>
            <person name="D'Souza L.M."/>
            <person name="Martin K."/>
            <person name="Wu J.Q."/>
            <person name="Gonzalez-Garay M.L."/>
            <person name="Jackson A.R."/>
            <person name="Kalafus K.J."/>
            <person name="McLeod M.P."/>
            <person name="Milosavljevic A."/>
            <person name="Virk D."/>
            <person name="Volkov A."/>
            <person name="Wheeler D.A."/>
            <person name="Zhang Z."/>
            <person name="Bailey J.A."/>
            <person name="Eichler E.E."/>
            <person name="Tuzun E."/>
            <person name="Birney E."/>
            <person name="Mongin E."/>
            <person name="Ureta-Vidal A."/>
            <person name="Woodwark C."/>
            <person name="Zdobnov E."/>
            <person name="Bork P."/>
            <person name="Suyama M."/>
            <person name="Torrents D."/>
            <person name="Alexandersson M."/>
            <person name="Trask B.J."/>
            <person name="Young J.M."/>
            <person name="Huang H."/>
            <person name="Wang H."/>
            <person name="Xing H."/>
            <person name="Daniels S."/>
            <person name="Gietzen D."/>
            <person name="Schmidt J."/>
            <person name="Stevens K."/>
            <person name="Vitt U."/>
            <person name="Wingrove J."/>
            <person name="Camara F."/>
            <person name="Mar Alba M."/>
            <person name="Abril J.F."/>
            <person name="Guigo R."/>
            <person name="Smit A."/>
            <person name="Dubchak I."/>
            <person name="Rubin E.M."/>
            <person name="Couronne O."/>
            <person name="Poliakov A."/>
            <person name="Huebner N."/>
            <person name="Ganten D."/>
            <person name="Goesele C."/>
            <person name="Hummel O."/>
            <person name="Kreitler T."/>
            <person name="Lee Y.-A."/>
            <person name="Monti J."/>
            <person name="Schulz H."/>
            <person name="Zimdahl H."/>
            <person name="Himmelbauer H."/>
            <person name="Lehrach H."/>
            <person name="Jacob H.J."/>
            <person name="Bromberg S."/>
            <person name="Gullings-Handley J."/>
            <person name="Jensen-Seaman M.I."/>
            <person name="Kwitek A.E."/>
            <person name="Lazar J."/>
            <person name="Pasko D."/>
            <person name="Tonellato P.J."/>
            <person name="Twigger S."/>
            <person name="Ponting C.P."/>
            <person name="Duarte J.M."/>
            <person name="Rice S."/>
            <person name="Goodstadt L."/>
            <person name="Beatson S.A."/>
            <person name="Emes R.D."/>
            <person name="Winter E.E."/>
            <person name="Webber C."/>
            <person name="Brandt P."/>
            <person name="Nyakatura G."/>
            <person name="Adetobi M."/>
            <person name="Chiaromonte F."/>
            <person name="Elnitski L."/>
            <person name="Eswara P."/>
            <person name="Hardison R.C."/>
            <person name="Hou M."/>
            <person name="Kolbe D."/>
            <person name="Makova K."/>
            <person name="Miller W."/>
            <person name="Nekrutenko A."/>
            <person name="Riemer C."/>
            <person name="Schwartz S."/>
            <person name="Taylor J."/>
            <person name="Yang S."/>
            <person name="Zhang Y."/>
            <person name="Lindpaintner K."/>
            <person name="Andrews T.D."/>
            <person name="Caccamo M."/>
            <person name="Clamp M."/>
            <person name="Clarke L."/>
            <person name="Curwen V."/>
            <person name="Durbin R.M."/>
            <person name="Eyras E."/>
            <person name="Searle S.M."/>
            <person name="Cooper G.M."/>
            <person name="Batzoglou S."/>
            <person name="Brudno M."/>
            <person name="Sidow A."/>
            <person name="Stone E.A."/>
            <person name="Payseur B.A."/>
            <person name="Bourque G."/>
            <person name="Lopez-Otin C."/>
            <person name="Puente X.S."/>
            <person name="Chakrabarti K."/>
            <person name="Chatterji S."/>
            <person name="Dewey C."/>
            <person name="Pachter L."/>
            <person name="Bray N."/>
            <person name="Yap V.B."/>
            <person name="Caspi A."/>
            <person name="Tesler G."/>
            <person name="Pevzner P.A."/>
            <person name="Haussler D."/>
            <person name="Roskin K.M."/>
            <person name="Baertsch R."/>
            <person name="Clawson H."/>
            <person name="Furey T.S."/>
            <person name="Hinrichs A.S."/>
            <person name="Karolchik D."/>
            <person name="Kent W.J."/>
            <person name="Rosenbloom K.R."/>
            <person name="Trumbower H."/>
            <person name="Weirauch M."/>
            <person name="Cooper D.N."/>
            <person name="Stenson P.D."/>
            <person name="Ma B."/>
            <person name="Brent M."/>
            <person name="Arumugam M."/>
            <person name="Shteynberg D."/>
            <person name="Copley R.R."/>
            <person name="Taylor M.S."/>
            <person name="Riethman H."/>
            <person name="Mudunuri U."/>
            <person name="Peterson J."/>
            <person name="Guyer M."/>
            <person name="Felsenfeld A."/>
            <person name="Old S."/>
            <person name="Mockrin S."/>
            <person name="Collins F.S."/>
        </authorList>
    </citation>
    <scope>NUCLEOTIDE SEQUENCE [LARGE SCALE GENOMIC DNA]</scope>
    <source>
        <strain>Brown Norway</strain>
    </source>
</reference>
<reference key="2">
    <citation type="journal article" date="2000" name="J. Am. Soc. Nephrol.">
        <title>New rat model that phenotypically resembles autosomal recessive polycystic kidney disease.</title>
        <authorList>
            <person name="Nauta J."/>
            <person name="Goedbloed M.A."/>
            <person name="Herck H.V."/>
            <person name="Hesselink D.A."/>
            <person name="Visser P."/>
            <person name="Willemsen R."/>
            <person name="Van Dokkum R.P.E."/>
            <person name="Wright C.J."/>
            <person name="Guay-Woodford L.M."/>
        </authorList>
    </citation>
    <scope>IDENTIFICATION</scope>
</reference>
<reference key="3">
    <citation type="journal article" date="2009" name="J. Biol. Chem.">
        <title>Meckel-Gruber syndrome protein MKS3 is required for endoplasmic reticulum-associated degradation of surfactant protein C.</title>
        <authorList>
            <person name="Wang M."/>
            <person name="Bridges J.P."/>
            <person name="Na C.L."/>
            <person name="Xu Y."/>
            <person name="Weaver T.E."/>
        </authorList>
    </citation>
    <scope>SUBCELLULAR LOCATION</scope>
    <scope>FUNCTION</scope>
</reference>
<reference key="4">
    <citation type="journal article" date="2009" name="Hum. Mol. Genet.">
        <title>Ciliary and centrosomal defects associated with mutation and depletion of the Meckel syndrome genes MKS1 and MKS3.</title>
        <authorList>
            <person name="Tammachote R."/>
            <person name="Hommerding C.J."/>
            <person name="Sinders R.M."/>
            <person name="Miller C.A."/>
            <person name="Czarnecki P.G."/>
            <person name="Leightner A.C."/>
            <person name="Salisbury J.L."/>
            <person name="Ward C.J."/>
            <person name="Torres V.E."/>
            <person name="Gattone V.H. II"/>
            <person name="Harris P.C."/>
        </authorList>
    </citation>
    <scope>FUNCTION</scope>
</reference>
<reference key="5">
    <citation type="journal article" date="2006" name="Nat. Genet.">
        <title>The transmembrane protein meckelin (MKS3) is mutated in Meckel-Gruber syndrome and the wpk rat.</title>
        <authorList>
            <person name="Smith U.M."/>
            <person name="Consugar M."/>
            <person name="Tee L.J."/>
            <person name="McKee B.M."/>
            <person name="Maina E.N."/>
            <person name="Whelan S."/>
            <person name="Morgan N.V."/>
            <person name="Goranson E."/>
            <person name="Gissen P."/>
            <person name="Lilliquist S."/>
            <person name="Aligianis I.A."/>
            <person name="Ward C.J."/>
            <person name="Pasha S."/>
            <person name="Punyashthiti R."/>
            <person name="Malik Sharif S."/>
            <person name="Batman P.A."/>
            <person name="Bennett C.P."/>
            <person name="Woods C.G."/>
            <person name="McKeown C."/>
            <person name="Bucourt M."/>
            <person name="Miller C.A."/>
            <person name="Cox P."/>
            <person name="Algazali L."/>
            <person name="Trembath R.C."/>
            <person name="Torres V.E."/>
            <person name="Attie-Bitach T."/>
            <person name="Kelly D.A."/>
            <person name="Maher E.R."/>
            <person name="Gattone V.H."/>
            <person name="Harris P.C."/>
            <person name="Johnson C.A."/>
        </authorList>
    </citation>
    <scope>VARIANT WPK LEU-389</scope>
</reference>
<accession>P0C152</accession>
<proteinExistence type="evidence at protein level"/>
<organism>
    <name type="scientific">Rattus norvegicus</name>
    <name type="common">Rat</name>
    <dbReference type="NCBI Taxonomy" id="10116"/>
    <lineage>
        <taxon>Eukaryota</taxon>
        <taxon>Metazoa</taxon>
        <taxon>Chordata</taxon>
        <taxon>Craniata</taxon>
        <taxon>Vertebrata</taxon>
        <taxon>Euteleostomi</taxon>
        <taxon>Mammalia</taxon>
        <taxon>Eutheria</taxon>
        <taxon>Euarchontoglires</taxon>
        <taxon>Glires</taxon>
        <taxon>Rodentia</taxon>
        <taxon>Myomorpha</taxon>
        <taxon>Muroidea</taxon>
        <taxon>Muridae</taxon>
        <taxon>Murinae</taxon>
        <taxon>Rattus</taxon>
    </lineage>
</organism>
<gene>
    <name type="primary">Tmem67</name>
    <name type="synonym">Mks3</name>
    <name type="synonym">Wpk</name>
</gene>
<evidence type="ECO:0000250" key="1">
    <source>
        <dbReference type="UniProtKB" id="Q5HYA8"/>
    </source>
</evidence>
<evidence type="ECO:0000250" key="2">
    <source>
        <dbReference type="UniProtKB" id="Q8BR76"/>
    </source>
</evidence>
<evidence type="ECO:0000255" key="3"/>
<evidence type="ECO:0000269" key="4">
    <source>
    </source>
</evidence>
<evidence type="ECO:0000269" key="5">
    <source>
    </source>
</evidence>
<evidence type="ECO:0000269" key="6">
    <source>
    </source>
</evidence>
<sequence length="992" mass="111740">MVMRTRPLAAMAVRSCFSALTGTVYLLLVLCEVSWAQIFSFPFQRPETCDLNQYFDISALSCAPCGANQRRDALGTSCICLPGYHMISNNGGPSIICKKCPENMKGVTKDGWDCISCPNGLTAEGKCHCPSGHILVERNVSGSLLSQATCELCDGNENSFTKPNALGTRCVRCEPTFVNTSRSCSCSEPHISTGGLCFSNTGNFPQRLISTERYGELGMSSNSEWFTKYLQATAAACWTHSNLTSCQALGNMCVMNMNSYDSTTFDACRLFHYVFEGAAGLTGVHSVPFWRQNLPWLFYGDQPGLASQVLSTTPLPTNFSFKGQNQLKFVAASYDIRGNFIRWQTVKGGVLQLCPDTERRLDAAYSFGTTYQQNCEISLSKLLADFPSPVFYDIYLEYTDEVQHHYLWAIPVLNLNLQHNKLFVNQDSSSSKWLLTRRIFLVDAVSGRENDLGNQPRVIRVATQISLSIRLVPNTKNGNIYTPLLTIAYSDIDIKNAYSQSVKISFSVKYEMNQGDAFVQTDIALGVLGGLAVLSSLLKTAGWKRRIGSPMIDLQTVMKFLLYYAGDLANVFFIITVGTGLYWLIFFKAQKSVSVLLPMPVQEERFVTYVGCAFAMKALQFLHKLISQITIDIFFIDWERPKGKVLKAVEGEGGVRSATVPVSIWRTYFVANEWNEIQTVRKINPLFQVLTTLFFLEVVGFKNLALMDPSSSLSRSLSDYAAPYSRILRYAVATTIWLVIGIVQVVFFAAFYERFIEDKIRQFVDLCSMSNVSVFLLSHRCFGYYIHGRSVHGHADTNMEDMNMNLRREAENLCSQRGLVPNTDGQTFQIAVSSQMRQHYDRIHETLTRRNGPARLLSSSGSTLEQSIKAYHAMNKFLGSFIDHVHKEMDYFIKDKLLLEKILGMEFMEPLEKSIFYNDESHSFSSVLYYGNEATLLIFDLLFFCVVDLACQNFVLASFLTYLQQEIFRFIRNTVGQKNLATKTLVDERFLI</sequence>
<dbReference type="EMBL" id="AABR03040910">
    <property type="status" value="NOT_ANNOTATED_CDS"/>
    <property type="molecule type" value="Genomic_DNA"/>
</dbReference>
<dbReference type="EMBL" id="AABR03041815">
    <property type="status" value="NOT_ANNOTATED_CDS"/>
    <property type="molecule type" value="Genomic_DNA"/>
</dbReference>
<dbReference type="SMR" id="P0C152"/>
<dbReference type="FunCoup" id="P0C152">
    <property type="interactions" value="845"/>
</dbReference>
<dbReference type="STRING" id="10116.ENSRNOP00000021839"/>
<dbReference type="GlyCosmos" id="P0C152">
    <property type="glycosylation" value="1 site, No reported glycans"/>
</dbReference>
<dbReference type="GlyGen" id="P0C152">
    <property type="glycosylation" value="1 site"/>
</dbReference>
<dbReference type="PhosphoSitePlus" id="P0C152"/>
<dbReference type="PaxDb" id="10116-ENSRNOP00000021839"/>
<dbReference type="UCSC" id="RGD:1586167">
    <property type="organism name" value="rat"/>
</dbReference>
<dbReference type="AGR" id="RGD:1586167"/>
<dbReference type="RGD" id="1586167">
    <property type="gene designation" value="Tmem67"/>
</dbReference>
<dbReference type="eggNOG" id="KOG4611">
    <property type="taxonomic scope" value="Eukaryota"/>
</dbReference>
<dbReference type="InParanoid" id="P0C152"/>
<dbReference type="OrthoDB" id="419138at2759"/>
<dbReference type="PhylomeDB" id="P0C152"/>
<dbReference type="Reactome" id="R-RNO-5620912">
    <property type="pathway name" value="Anchoring of the basal body to the plasma membrane"/>
</dbReference>
<dbReference type="PRO" id="PR:P0C152"/>
<dbReference type="Proteomes" id="UP000002494">
    <property type="component" value="Unplaced"/>
</dbReference>
<dbReference type="GO" id="GO:0005930">
    <property type="term" value="C:axoneme"/>
    <property type="evidence" value="ECO:0000314"/>
    <property type="project" value="RGD"/>
</dbReference>
<dbReference type="GO" id="GO:0005813">
    <property type="term" value="C:centrosome"/>
    <property type="evidence" value="ECO:0000266"/>
    <property type="project" value="RGD"/>
</dbReference>
<dbReference type="GO" id="GO:0060170">
    <property type="term" value="C:ciliary membrane"/>
    <property type="evidence" value="ECO:0000266"/>
    <property type="project" value="RGD"/>
</dbReference>
<dbReference type="GO" id="GO:0035869">
    <property type="term" value="C:ciliary transition zone"/>
    <property type="evidence" value="ECO:0000266"/>
    <property type="project" value="RGD"/>
</dbReference>
<dbReference type="GO" id="GO:0030659">
    <property type="term" value="C:cytoplasmic vesicle membrane"/>
    <property type="evidence" value="ECO:0000314"/>
    <property type="project" value="UniProtKB"/>
</dbReference>
<dbReference type="GO" id="GO:0005789">
    <property type="term" value="C:endoplasmic reticulum membrane"/>
    <property type="evidence" value="ECO:0000314"/>
    <property type="project" value="UniProtKB"/>
</dbReference>
<dbReference type="GO" id="GO:0036038">
    <property type="term" value="C:MKS complex"/>
    <property type="evidence" value="ECO:0000250"/>
    <property type="project" value="UniProtKB"/>
</dbReference>
<dbReference type="GO" id="GO:0031005">
    <property type="term" value="F:filamin binding"/>
    <property type="evidence" value="ECO:0000266"/>
    <property type="project" value="RGD"/>
</dbReference>
<dbReference type="GO" id="GO:0051787">
    <property type="term" value="F:misfolded protein binding"/>
    <property type="evidence" value="ECO:0000314"/>
    <property type="project" value="RGD"/>
</dbReference>
<dbReference type="GO" id="GO:0051082">
    <property type="term" value="F:unfolded protein binding"/>
    <property type="evidence" value="ECO:0000266"/>
    <property type="project" value="RGD"/>
</dbReference>
<dbReference type="GO" id="GO:0048754">
    <property type="term" value="P:branching morphogenesis of an epithelial tube"/>
    <property type="evidence" value="ECO:0000266"/>
    <property type="project" value="RGD"/>
</dbReference>
<dbReference type="GO" id="GO:0060271">
    <property type="term" value="P:cilium assembly"/>
    <property type="evidence" value="ECO:0000315"/>
    <property type="project" value="UniProtKB"/>
</dbReference>
<dbReference type="GO" id="GO:0007368">
    <property type="term" value="P:determination of left/right symmetry"/>
    <property type="evidence" value="ECO:0000266"/>
    <property type="project" value="RGD"/>
</dbReference>
<dbReference type="GO" id="GO:0060441">
    <property type="term" value="P:epithelial tube branching involved in lung morphogenesis"/>
    <property type="evidence" value="ECO:0000266"/>
    <property type="project" value="RGD"/>
</dbReference>
<dbReference type="GO" id="GO:0036503">
    <property type="term" value="P:ERAD pathway"/>
    <property type="evidence" value="ECO:0000266"/>
    <property type="project" value="RGD"/>
</dbReference>
<dbReference type="GO" id="GO:0060322">
    <property type="term" value="P:head development"/>
    <property type="evidence" value="ECO:0000315"/>
    <property type="project" value="RGD"/>
</dbReference>
<dbReference type="GO" id="GO:0007507">
    <property type="term" value="P:heart development"/>
    <property type="evidence" value="ECO:0000266"/>
    <property type="project" value="RGD"/>
</dbReference>
<dbReference type="GO" id="GO:0001822">
    <property type="term" value="P:kidney development"/>
    <property type="evidence" value="ECO:0000266"/>
    <property type="project" value="RGD"/>
</dbReference>
<dbReference type="GO" id="GO:0010826">
    <property type="term" value="P:negative regulation of centrosome duplication"/>
    <property type="evidence" value="ECO:0000315"/>
    <property type="project" value="RGD"/>
</dbReference>
<dbReference type="GO" id="GO:0035567">
    <property type="term" value="P:non-canonical Wnt signaling pathway"/>
    <property type="evidence" value="ECO:0000266"/>
    <property type="project" value="RGD"/>
</dbReference>
<dbReference type="GO" id="GO:0035845">
    <property type="term" value="P:photoreceptor cell outer segment organization"/>
    <property type="evidence" value="ECO:0000315"/>
    <property type="project" value="RGD"/>
</dbReference>
<dbReference type="GO" id="GO:1904294">
    <property type="term" value="P:positive regulation of ERAD pathway"/>
    <property type="evidence" value="ECO:0000315"/>
    <property type="project" value="RGD"/>
</dbReference>
<dbReference type="GO" id="GO:1902857">
    <property type="term" value="P:positive regulation of non-motile cilium assembly"/>
    <property type="evidence" value="ECO:0000315"/>
    <property type="project" value="RGD"/>
</dbReference>
<dbReference type="InterPro" id="IPR009030">
    <property type="entry name" value="Growth_fac_rcpt_cys_sf"/>
</dbReference>
<dbReference type="InterPro" id="IPR019170">
    <property type="entry name" value="Meckelin"/>
</dbReference>
<dbReference type="PANTHER" id="PTHR21274">
    <property type="entry name" value="MECKELIN"/>
    <property type="match status" value="1"/>
</dbReference>
<dbReference type="PANTHER" id="PTHR21274:SF2">
    <property type="entry name" value="MECKELIN"/>
    <property type="match status" value="1"/>
</dbReference>
<dbReference type="Pfam" id="PF09773">
    <property type="entry name" value="Meckelin"/>
    <property type="match status" value="1"/>
</dbReference>
<dbReference type="SUPFAM" id="SSF57184">
    <property type="entry name" value="Growth factor receptor domain"/>
    <property type="match status" value="1"/>
</dbReference>
<feature type="signal peptide" evidence="3">
    <location>
        <begin position="1"/>
        <end position="35"/>
    </location>
</feature>
<feature type="chain" id="PRO_0000225691" description="Meckelin" evidence="3">
    <location>
        <begin position="36"/>
        <end position="992"/>
    </location>
</feature>
<feature type="topological domain" description="Extracellular" evidence="1">
    <location>
        <begin position="36"/>
        <end position="516"/>
    </location>
</feature>
<feature type="transmembrane region" description="Helical; Name=1" evidence="1">
    <location>
        <begin position="517"/>
        <end position="545"/>
    </location>
</feature>
<feature type="topological domain" description="Cytoplasmic" evidence="1">
    <location>
        <begin position="546"/>
        <end position="555"/>
    </location>
</feature>
<feature type="transmembrane region" description="Helical; Name=2" evidence="1">
    <location>
        <begin position="556"/>
        <end position="587"/>
    </location>
</feature>
<feature type="topological domain" description="Extracellular" evidence="1">
    <location>
        <begin position="588"/>
        <end position="600"/>
    </location>
</feature>
<feature type="transmembrane region" description="Helical; Name=3" evidence="1">
    <location>
        <begin position="601"/>
        <end position="628"/>
    </location>
</feature>
<feature type="topological domain" description="Cytoplasmic" evidence="1">
    <location>
        <begin position="629"/>
        <end position="667"/>
    </location>
</feature>
<feature type="transmembrane region" description="Discontinuously helical; Name=4" evidence="1">
    <location>
        <begin position="668"/>
        <end position="698"/>
    </location>
</feature>
<feature type="intramembrane region" description="Helical; Name=4A" evidence="1">
    <location>
        <begin position="668"/>
        <end position="676"/>
    </location>
</feature>
<feature type="intramembrane region" evidence="1">
    <location>
        <begin position="677"/>
        <end position="685"/>
    </location>
</feature>
<feature type="intramembrane region" description="Helical; Name=4B" evidence="1">
    <location>
        <begin position="686"/>
        <end position="698"/>
    </location>
</feature>
<feature type="topological domain" description="Extracellular" evidence="1">
    <location>
        <begin position="699"/>
        <end position="728"/>
    </location>
</feature>
<feature type="transmembrane region" description="Discontinuously helical; Name=5" evidence="1">
    <location>
        <begin position="729"/>
        <end position="768"/>
    </location>
</feature>
<feature type="intramembrane region" description="Helical; Name=5A" evidence="1">
    <location>
        <begin position="729"/>
        <end position="754"/>
    </location>
</feature>
<feature type="intramembrane region" evidence="1">
    <location>
        <begin position="755"/>
        <end position="759"/>
    </location>
</feature>
<feature type="intramembrane region" description="Helical; Name=5B" evidence="1">
    <location>
        <begin position="760"/>
        <end position="768"/>
    </location>
</feature>
<feature type="topological domain" description="Cytoplasmic" evidence="1">
    <location>
        <begin position="769"/>
        <end position="923"/>
    </location>
</feature>
<feature type="transmembrane region" description="Discontinuously helical; Name=6" evidence="1">
    <location>
        <begin position="924"/>
        <end position="949"/>
    </location>
</feature>
<feature type="intramembrane region" description="Helical; Name=6A" evidence="1">
    <location>
        <begin position="924"/>
        <end position="926"/>
    </location>
</feature>
<feature type="intramembrane region" evidence="1">
    <location>
        <begin position="927"/>
        <end position="933"/>
    </location>
</feature>
<feature type="intramembrane region" description="Helical; Name=6B" evidence="1">
    <location>
        <begin position="934"/>
        <end position="949"/>
    </location>
</feature>
<feature type="topological domain" description="Extracellular" evidence="1">
    <location>
        <begin position="950"/>
        <end position="954"/>
    </location>
</feature>
<feature type="transmembrane region" description="Helical; Name=7" evidence="1">
    <location>
        <begin position="955"/>
        <end position="982"/>
    </location>
</feature>
<feature type="topological domain" description="Cytoplasmic" evidence="1">
    <location>
        <begin position="983"/>
        <end position="992"/>
    </location>
</feature>
<feature type="region of interest" description="Cysteine-rich" evidence="1">
    <location>
        <begin position="37"/>
        <end position="280"/>
    </location>
</feature>
<feature type="glycosylation site" description="N-linked (GlcNAc...) asparagine" evidence="3">
    <location>
        <position position="242"/>
    </location>
</feature>
<feature type="disulfide bond" evidence="1">
    <location>
        <begin position="49"/>
        <end position="62"/>
    </location>
</feature>
<feature type="disulfide bond" evidence="1">
    <location>
        <begin position="65"/>
        <end position="78"/>
    </location>
</feature>
<feature type="disulfide bond" evidence="1">
    <location>
        <begin position="80"/>
        <end position="97"/>
    </location>
</feature>
<feature type="disulfide bond" evidence="1">
    <location>
        <begin position="100"/>
        <end position="114"/>
    </location>
</feature>
<feature type="disulfide bond" evidence="1">
    <location>
        <begin position="117"/>
        <end position="127"/>
    </location>
</feature>
<feature type="disulfide bond" evidence="1">
    <location>
        <begin position="129"/>
        <end position="150"/>
    </location>
</feature>
<feature type="disulfide bond" evidence="1">
    <location>
        <begin position="153"/>
        <end position="170"/>
    </location>
</feature>
<feature type="disulfide bond" evidence="1">
    <location>
        <begin position="173"/>
        <end position="184"/>
    </location>
</feature>
<feature type="disulfide bond" evidence="1">
    <location>
        <begin position="186"/>
        <end position="197"/>
    </location>
</feature>
<feature type="disulfide bond" evidence="1">
    <location>
        <begin position="237"/>
        <end position="246"/>
    </location>
</feature>
<feature type="disulfide bond" evidence="1">
    <location>
        <begin position="253"/>
        <end position="268"/>
    </location>
</feature>
<feature type="disulfide bond" evidence="1">
    <location>
        <begin position="354"/>
        <end position="375"/>
    </location>
</feature>
<feature type="sequence variant" description="In Wpk." evidence="4">
    <original>P</original>
    <variation>L</variation>
    <location>
        <position position="389"/>
    </location>
</feature>
<protein>
    <recommendedName>
        <fullName>Meckelin</fullName>
    </recommendedName>
    <alternativeName>
        <fullName>Meckel syndrome type 3 protein homolog</fullName>
    </alternativeName>
    <alternativeName>
        <fullName>Transmembrane protein 67</fullName>
    </alternativeName>
</protein>
<name>MKS3_RAT</name>
<keyword id="KW-1003">Cell membrane</keyword>
<keyword id="KW-0966">Cell projection</keyword>
<keyword id="KW-0969">Cilium</keyword>
<keyword id="KW-0970">Cilium biogenesis/degradation</keyword>
<keyword id="KW-0963">Cytoplasm</keyword>
<keyword id="KW-0206">Cytoskeleton</keyword>
<keyword id="KW-0225">Disease variant</keyword>
<keyword id="KW-1015">Disulfide bond</keyword>
<keyword id="KW-0256">Endoplasmic reticulum</keyword>
<keyword id="KW-0325">Glycoprotein</keyword>
<keyword id="KW-0472">Membrane</keyword>
<keyword id="KW-1185">Reference proteome</keyword>
<keyword id="KW-0732">Signal</keyword>
<keyword id="KW-0812">Transmembrane</keyword>
<keyword id="KW-1133">Transmembrane helix</keyword>